<sequence length="269" mass="28795">MVRVAIAGAAGRMGRNLIKAVNGSQFAVLAAASERPESSLIGVDVGEMAGLGKSGILIVDDLAKVTDDFDVIIDFTLPISTLKNIELCQEHNKAIVIGTTGFSEPGKEIIDQASKEIPVVMAPNYSVGVNLVFKLLEKAAKVMGDYCDIEIVEAHHRYKVDAPSGTAIGMGEAIAGAMGNKLEDVAVYAREGITGERSKDEIGFATIRAGDIVGEHTAMFADIGERVEITHKATDRMTFANGAVRASHWLHKKEPGFYTMHDVLNLDQI</sequence>
<dbReference type="EC" id="1.17.1.8" evidence="1"/>
<dbReference type="EMBL" id="CP000020">
    <property type="protein sequence ID" value="AAW84966.1"/>
    <property type="molecule type" value="Genomic_DNA"/>
</dbReference>
<dbReference type="RefSeq" id="WP_005417649.1">
    <property type="nucleotide sequence ID" value="NZ_CAWLES010000001.1"/>
</dbReference>
<dbReference type="RefSeq" id="YP_203854.1">
    <property type="nucleotide sequence ID" value="NC_006840.2"/>
</dbReference>
<dbReference type="SMR" id="Q5E7N0"/>
<dbReference type="STRING" id="312309.VF_0471"/>
<dbReference type="EnsemblBacteria" id="AAW84966">
    <property type="protein sequence ID" value="AAW84966"/>
    <property type="gene ID" value="VF_0471"/>
</dbReference>
<dbReference type="GeneID" id="54163107"/>
<dbReference type="KEGG" id="vfi:VF_0471"/>
<dbReference type="PATRIC" id="fig|312309.11.peg.461"/>
<dbReference type="eggNOG" id="COG0289">
    <property type="taxonomic scope" value="Bacteria"/>
</dbReference>
<dbReference type="HOGENOM" id="CLU_047479_2_1_6"/>
<dbReference type="OrthoDB" id="9790352at2"/>
<dbReference type="UniPathway" id="UPA00034">
    <property type="reaction ID" value="UER00018"/>
</dbReference>
<dbReference type="Proteomes" id="UP000000537">
    <property type="component" value="Chromosome I"/>
</dbReference>
<dbReference type="GO" id="GO:0005829">
    <property type="term" value="C:cytosol"/>
    <property type="evidence" value="ECO:0007669"/>
    <property type="project" value="TreeGrafter"/>
</dbReference>
<dbReference type="GO" id="GO:0008839">
    <property type="term" value="F:4-hydroxy-tetrahydrodipicolinate reductase"/>
    <property type="evidence" value="ECO:0007669"/>
    <property type="project" value="UniProtKB-EC"/>
</dbReference>
<dbReference type="GO" id="GO:0051287">
    <property type="term" value="F:NAD binding"/>
    <property type="evidence" value="ECO:0007669"/>
    <property type="project" value="UniProtKB-UniRule"/>
</dbReference>
<dbReference type="GO" id="GO:0050661">
    <property type="term" value="F:NADP binding"/>
    <property type="evidence" value="ECO:0007669"/>
    <property type="project" value="UniProtKB-UniRule"/>
</dbReference>
<dbReference type="GO" id="GO:0016726">
    <property type="term" value="F:oxidoreductase activity, acting on CH or CH2 groups, NAD or NADP as acceptor"/>
    <property type="evidence" value="ECO:0007669"/>
    <property type="project" value="UniProtKB-UniRule"/>
</dbReference>
<dbReference type="GO" id="GO:0019877">
    <property type="term" value="P:diaminopimelate biosynthetic process"/>
    <property type="evidence" value="ECO:0007669"/>
    <property type="project" value="UniProtKB-UniRule"/>
</dbReference>
<dbReference type="GO" id="GO:0009089">
    <property type="term" value="P:lysine biosynthetic process via diaminopimelate"/>
    <property type="evidence" value="ECO:0007669"/>
    <property type="project" value="UniProtKB-UniRule"/>
</dbReference>
<dbReference type="CDD" id="cd02274">
    <property type="entry name" value="DHDPR_N"/>
    <property type="match status" value="1"/>
</dbReference>
<dbReference type="FunFam" id="3.30.360.10:FF:000004">
    <property type="entry name" value="4-hydroxy-tetrahydrodipicolinate reductase"/>
    <property type="match status" value="1"/>
</dbReference>
<dbReference type="FunFam" id="3.40.50.720:FF:000048">
    <property type="entry name" value="4-hydroxy-tetrahydrodipicolinate reductase"/>
    <property type="match status" value="1"/>
</dbReference>
<dbReference type="Gene3D" id="3.30.360.10">
    <property type="entry name" value="Dihydrodipicolinate Reductase, domain 2"/>
    <property type="match status" value="1"/>
</dbReference>
<dbReference type="Gene3D" id="3.40.50.720">
    <property type="entry name" value="NAD(P)-binding Rossmann-like Domain"/>
    <property type="match status" value="1"/>
</dbReference>
<dbReference type="HAMAP" id="MF_00102">
    <property type="entry name" value="DapB"/>
    <property type="match status" value="1"/>
</dbReference>
<dbReference type="InterPro" id="IPR022663">
    <property type="entry name" value="DapB_C"/>
</dbReference>
<dbReference type="InterPro" id="IPR000846">
    <property type="entry name" value="DapB_N"/>
</dbReference>
<dbReference type="InterPro" id="IPR022664">
    <property type="entry name" value="DapB_N_CS"/>
</dbReference>
<dbReference type="InterPro" id="IPR023940">
    <property type="entry name" value="DHDPR_bac"/>
</dbReference>
<dbReference type="InterPro" id="IPR036291">
    <property type="entry name" value="NAD(P)-bd_dom_sf"/>
</dbReference>
<dbReference type="NCBIfam" id="TIGR00036">
    <property type="entry name" value="dapB"/>
    <property type="match status" value="1"/>
</dbReference>
<dbReference type="PANTHER" id="PTHR20836:SF0">
    <property type="entry name" value="4-HYDROXY-TETRAHYDRODIPICOLINATE REDUCTASE 1, CHLOROPLASTIC-RELATED"/>
    <property type="match status" value="1"/>
</dbReference>
<dbReference type="PANTHER" id="PTHR20836">
    <property type="entry name" value="DIHYDRODIPICOLINATE REDUCTASE"/>
    <property type="match status" value="1"/>
</dbReference>
<dbReference type="Pfam" id="PF05173">
    <property type="entry name" value="DapB_C"/>
    <property type="match status" value="1"/>
</dbReference>
<dbReference type="Pfam" id="PF01113">
    <property type="entry name" value="DapB_N"/>
    <property type="match status" value="1"/>
</dbReference>
<dbReference type="PIRSF" id="PIRSF000161">
    <property type="entry name" value="DHPR"/>
    <property type="match status" value="1"/>
</dbReference>
<dbReference type="SUPFAM" id="SSF55347">
    <property type="entry name" value="Glyceraldehyde-3-phosphate dehydrogenase-like, C-terminal domain"/>
    <property type="match status" value="1"/>
</dbReference>
<dbReference type="SUPFAM" id="SSF51735">
    <property type="entry name" value="NAD(P)-binding Rossmann-fold domains"/>
    <property type="match status" value="1"/>
</dbReference>
<dbReference type="PROSITE" id="PS01298">
    <property type="entry name" value="DAPB"/>
    <property type="match status" value="1"/>
</dbReference>
<reference key="1">
    <citation type="journal article" date="2005" name="Proc. Natl. Acad. Sci. U.S.A.">
        <title>Complete genome sequence of Vibrio fischeri: a symbiotic bacterium with pathogenic congeners.</title>
        <authorList>
            <person name="Ruby E.G."/>
            <person name="Urbanowski M."/>
            <person name="Campbell J."/>
            <person name="Dunn A."/>
            <person name="Faini M."/>
            <person name="Gunsalus R."/>
            <person name="Lostroh P."/>
            <person name="Lupp C."/>
            <person name="McCann J."/>
            <person name="Millikan D."/>
            <person name="Schaefer A."/>
            <person name="Stabb E."/>
            <person name="Stevens A."/>
            <person name="Visick K."/>
            <person name="Whistler C."/>
            <person name="Greenberg E.P."/>
        </authorList>
    </citation>
    <scope>NUCLEOTIDE SEQUENCE [LARGE SCALE GENOMIC DNA]</scope>
    <source>
        <strain>ATCC 700601 / ES114</strain>
    </source>
</reference>
<gene>
    <name evidence="1" type="primary">dapB</name>
    <name type="ordered locus">VF_0471</name>
</gene>
<feature type="chain" id="PRO_0000228399" description="4-hydroxy-tetrahydrodipicolinate reductase">
    <location>
        <begin position="1"/>
        <end position="269"/>
    </location>
</feature>
<feature type="active site" description="Proton donor/acceptor" evidence="1">
    <location>
        <position position="155"/>
    </location>
</feature>
<feature type="active site" description="Proton donor" evidence="1">
    <location>
        <position position="159"/>
    </location>
</feature>
<feature type="binding site" evidence="1">
    <location>
        <begin position="8"/>
        <end position="13"/>
    </location>
    <ligand>
        <name>NAD(+)</name>
        <dbReference type="ChEBI" id="CHEBI:57540"/>
    </ligand>
</feature>
<feature type="binding site" evidence="1">
    <location>
        <position position="34"/>
    </location>
    <ligand>
        <name>NAD(+)</name>
        <dbReference type="ChEBI" id="CHEBI:57540"/>
    </ligand>
</feature>
<feature type="binding site" evidence="1">
    <location>
        <position position="35"/>
    </location>
    <ligand>
        <name>NADP(+)</name>
        <dbReference type="ChEBI" id="CHEBI:58349"/>
    </ligand>
</feature>
<feature type="binding site" evidence="1">
    <location>
        <begin position="98"/>
        <end position="100"/>
    </location>
    <ligand>
        <name>NAD(+)</name>
        <dbReference type="ChEBI" id="CHEBI:57540"/>
    </ligand>
</feature>
<feature type="binding site" evidence="1">
    <location>
        <begin position="122"/>
        <end position="125"/>
    </location>
    <ligand>
        <name>NAD(+)</name>
        <dbReference type="ChEBI" id="CHEBI:57540"/>
    </ligand>
</feature>
<feature type="binding site" evidence="1">
    <location>
        <position position="156"/>
    </location>
    <ligand>
        <name>(S)-2,3,4,5-tetrahydrodipicolinate</name>
        <dbReference type="ChEBI" id="CHEBI:16845"/>
    </ligand>
</feature>
<feature type="binding site" evidence="1">
    <location>
        <begin position="165"/>
        <end position="166"/>
    </location>
    <ligand>
        <name>(S)-2,3,4,5-tetrahydrodipicolinate</name>
        <dbReference type="ChEBI" id="CHEBI:16845"/>
    </ligand>
</feature>
<name>DAPB_ALIF1</name>
<keyword id="KW-0028">Amino-acid biosynthesis</keyword>
<keyword id="KW-0963">Cytoplasm</keyword>
<keyword id="KW-0220">Diaminopimelate biosynthesis</keyword>
<keyword id="KW-0457">Lysine biosynthesis</keyword>
<keyword id="KW-0520">NAD</keyword>
<keyword id="KW-0521">NADP</keyword>
<keyword id="KW-0560">Oxidoreductase</keyword>
<keyword id="KW-1185">Reference proteome</keyword>
<comment type="function">
    <text evidence="1">Catalyzes the conversion of 4-hydroxy-tetrahydrodipicolinate (HTPA) to tetrahydrodipicolinate.</text>
</comment>
<comment type="catalytic activity">
    <reaction evidence="1">
        <text>(S)-2,3,4,5-tetrahydrodipicolinate + NAD(+) + H2O = (2S,4S)-4-hydroxy-2,3,4,5-tetrahydrodipicolinate + NADH + H(+)</text>
        <dbReference type="Rhea" id="RHEA:35323"/>
        <dbReference type="ChEBI" id="CHEBI:15377"/>
        <dbReference type="ChEBI" id="CHEBI:15378"/>
        <dbReference type="ChEBI" id="CHEBI:16845"/>
        <dbReference type="ChEBI" id="CHEBI:57540"/>
        <dbReference type="ChEBI" id="CHEBI:57945"/>
        <dbReference type="ChEBI" id="CHEBI:67139"/>
        <dbReference type="EC" id="1.17.1.8"/>
    </reaction>
</comment>
<comment type="catalytic activity">
    <reaction evidence="1">
        <text>(S)-2,3,4,5-tetrahydrodipicolinate + NADP(+) + H2O = (2S,4S)-4-hydroxy-2,3,4,5-tetrahydrodipicolinate + NADPH + H(+)</text>
        <dbReference type="Rhea" id="RHEA:35331"/>
        <dbReference type="ChEBI" id="CHEBI:15377"/>
        <dbReference type="ChEBI" id="CHEBI:15378"/>
        <dbReference type="ChEBI" id="CHEBI:16845"/>
        <dbReference type="ChEBI" id="CHEBI:57783"/>
        <dbReference type="ChEBI" id="CHEBI:58349"/>
        <dbReference type="ChEBI" id="CHEBI:67139"/>
        <dbReference type="EC" id="1.17.1.8"/>
    </reaction>
</comment>
<comment type="pathway">
    <text evidence="1">Amino-acid biosynthesis; L-lysine biosynthesis via DAP pathway; (S)-tetrahydrodipicolinate from L-aspartate: step 4/4.</text>
</comment>
<comment type="subcellular location">
    <subcellularLocation>
        <location evidence="1">Cytoplasm</location>
    </subcellularLocation>
</comment>
<comment type="similarity">
    <text evidence="1">Belongs to the DapB family.</text>
</comment>
<comment type="caution">
    <text evidence="2">Was originally thought to be a dihydrodipicolinate reductase (DHDPR), catalyzing the conversion of dihydrodipicolinate to tetrahydrodipicolinate. However, it was shown in E.coli that the substrate of the enzymatic reaction is not dihydrodipicolinate (DHDP) but in fact (2S,4S)-4-hydroxy-2,3,4,5-tetrahydrodipicolinic acid (HTPA), the product released by the DapA-catalyzed reaction.</text>
</comment>
<organism>
    <name type="scientific">Aliivibrio fischeri (strain ATCC 700601 / ES114)</name>
    <name type="common">Vibrio fischeri</name>
    <dbReference type="NCBI Taxonomy" id="312309"/>
    <lineage>
        <taxon>Bacteria</taxon>
        <taxon>Pseudomonadati</taxon>
        <taxon>Pseudomonadota</taxon>
        <taxon>Gammaproteobacteria</taxon>
        <taxon>Vibrionales</taxon>
        <taxon>Vibrionaceae</taxon>
        <taxon>Aliivibrio</taxon>
    </lineage>
</organism>
<protein>
    <recommendedName>
        <fullName evidence="1">4-hydroxy-tetrahydrodipicolinate reductase</fullName>
        <shortName evidence="1">HTPA reductase</shortName>
        <ecNumber evidence="1">1.17.1.8</ecNumber>
    </recommendedName>
</protein>
<accession>Q5E7N0</accession>
<proteinExistence type="inferred from homology"/>
<evidence type="ECO:0000255" key="1">
    <source>
        <dbReference type="HAMAP-Rule" id="MF_00102"/>
    </source>
</evidence>
<evidence type="ECO:0000305" key="2"/>